<accession>P0CH10</accession>
<accession>P14624</accession>
<accession>P14695</accession>
<organism>
    <name type="scientific">Chlamydomonas reinhardtii</name>
    <name type="common">Chlamydomonas smithii</name>
    <dbReference type="NCBI Taxonomy" id="3055"/>
    <lineage>
        <taxon>Eukaryota</taxon>
        <taxon>Viridiplantae</taxon>
        <taxon>Chlorophyta</taxon>
        <taxon>core chlorophytes</taxon>
        <taxon>Chlorophyceae</taxon>
        <taxon>CS clade</taxon>
        <taxon>Chlamydomonadales</taxon>
        <taxon>Chlamydomonadaceae</taxon>
        <taxon>Chlamydomonas</taxon>
    </lineage>
</organism>
<protein>
    <recommendedName>
        <fullName evidence="3">Ubiquitin-ribosomal protein eL40y fusion protein</fullName>
    </recommendedName>
    <component>
        <recommendedName>
            <fullName>Ubiquitin</fullName>
        </recommendedName>
    </component>
    <component>
        <recommendedName>
            <fullName evidence="3">Large ribosomal subunit protein eL40y</fullName>
        </recommendedName>
        <alternativeName>
            <fullName>60S ribosomal protein L40</fullName>
        </alternativeName>
        <alternativeName>
            <fullName>CEP52</fullName>
        </alternativeName>
    </component>
</protein>
<proteinExistence type="evidence at protein level"/>
<feature type="chain" id="PRO_0000396457" description="Ubiquitin">
    <location>
        <begin position="1"/>
        <end position="76"/>
    </location>
</feature>
<feature type="chain" id="PRO_0000396458" description="Large ribosomal subunit protein eL40y">
    <location>
        <begin position="77"/>
        <end position="128"/>
    </location>
</feature>
<feature type="domain" description="Ubiquitin-like" evidence="2">
    <location>
        <begin position="1"/>
        <end position="76"/>
    </location>
</feature>
<feature type="cross-link" description="Glycyl lysine isopeptide (Lys-Gly) (interchain with G-Cter in ubiquitin)">
    <location>
        <position position="48"/>
    </location>
</feature>
<feature type="cross-link" description="Glycyl lysine isopeptide (Gly-Lys) (interchain with K-? in acceptor proteins)" evidence="2">
    <location>
        <position position="76"/>
    </location>
</feature>
<sequence length="128" mass="14700">MQIFVKTLTGKTITLEVESSDTIENVKAKIQDKEGIPPDQQRLIFAGKQLEDGRTLADYNIQKESTLHLVLRLRGGIIEPSLQALARKYNQEKMICRKCYARLHPRAKNCRKKSCGHTNQLRPKKKLK</sequence>
<keyword id="KW-0963">Cytoplasm</keyword>
<keyword id="KW-0903">Direct protein sequencing</keyword>
<keyword id="KW-1017">Isopeptide bond</keyword>
<keyword id="KW-0539">Nucleus</keyword>
<keyword id="KW-0687">Ribonucleoprotein</keyword>
<keyword id="KW-0689">Ribosomal protein</keyword>
<keyword id="KW-0832">Ubl conjugation</keyword>
<dbReference type="EMBL" id="X60826">
    <property type="protein sequence ID" value="CAA43216.1"/>
    <property type="molecule type" value="mRNA"/>
</dbReference>
<dbReference type="RefSeq" id="XP_001700313.1">
    <property type="nucleotide sequence ID" value="XM_001700261.1"/>
</dbReference>
<dbReference type="SMR" id="P0CH10"/>
<dbReference type="EnsemblPlants" id="PNW87921">
    <property type="protein sequence ID" value="PNW87921"/>
    <property type="gene ID" value="CHLRE_01g007051v5"/>
</dbReference>
<dbReference type="Gramene" id="PNW87921">
    <property type="protein sequence ID" value="PNW87921"/>
    <property type="gene ID" value="CHLRE_01g007051v5"/>
</dbReference>
<dbReference type="KEGG" id="cre:CHLRE_01g007051v5"/>
<dbReference type="HOGENOM" id="CLU_010412_3_4_1"/>
<dbReference type="OMA" id="CGRCSQL"/>
<dbReference type="OrthoDB" id="472at2759"/>
<dbReference type="GO" id="GO:0005737">
    <property type="term" value="C:cytoplasm"/>
    <property type="evidence" value="ECO:0007669"/>
    <property type="project" value="UniProtKB-SubCell"/>
</dbReference>
<dbReference type="GO" id="GO:0005634">
    <property type="term" value="C:nucleus"/>
    <property type="evidence" value="ECO:0007669"/>
    <property type="project" value="UniProtKB-SubCell"/>
</dbReference>
<dbReference type="GO" id="GO:1990904">
    <property type="term" value="C:ribonucleoprotein complex"/>
    <property type="evidence" value="ECO:0007669"/>
    <property type="project" value="UniProtKB-KW"/>
</dbReference>
<dbReference type="GO" id="GO:0005840">
    <property type="term" value="C:ribosome"/>
    <property type="evidence" value="ECO:0007669"/>
    <property type="project" value="UniProtKB-KW"/>
</dbReference>
<dbReference type="GO" id="GO:0003729">
    <property type="term" value="F:mRNA binding"/>
    <property type="evidence" value="ECO:0007669"/>
    <property type="project" value="UniProtKB-ARBA"/>
</dbReference>
<dbReference type="GO" id="GO:0003735">
    <property type="term" value="F:structural constituent of ribosome"/>
    <property type="evidence" value="ECO:0007669"/>
    <property type="project" value="InterPro"/>
</dbReference>
<dbReference type="GO" id="GO:0006412">
    <property type="term" value="P:translation"/>
    <property type="evidence" value="ECO:0007669"/>
    <property type="project" value="InterPro"/>
</dbReference>
<dbReference type="CDD" id="cd01803">
    <property type="entry name" value="Ubl_ubiquitin"/>
    <property type="match status" value="1"/>
</dbReference>
<dbReference type="FunFam" id="3.10.20.90:FF:000014">
    <property type="entry name" value="Ubiquitin-60S ribosomal L40 fusion"/>
    <property type="match status" value="1"/>
</dbReference>
<dbReference type="FunFam" id="4.10.1060.50:FF:000001">
    <property type="entry name" value="ubiquitin-60S ribosomal protein L40"/>
    <property type="match status" value="1"/>
</dbReference>
<dbReference type="Gene3D" id="4.10.1060.50">
    <property type="match status" value="1"/>
</dbReference>
<dbReference type="Gene3D" id="3.10.20.90">
    <property type="entry name" value="Phosphatidylinositol 3-kinase Catalytic Subunit, Chain A, domain 1"/>
    <property type="match status" value="1"/>
</dbReference>
<dbReference type="InterPro" id="IPR001975">
    <property type="entry name" value="Ribosomal_eL40_dom"/>
</dbReference>
<dbReference type="InterPro" id="IPR038587">
    <property type="entry name" value="Ribosomal_eL40_sf"/>
</dbReference>
<dbReference type="InterPro" id="IPR000626">
    <property type="entry name" value="Ubiquitin-like_dom"/>
</dbReference>
<dbReference type="InterPro" id="IPR029071">
    <property type="entry name" value="Ubiquitin-like_domsf"/>
</dbReference>
<dbReference type="InterPro" id="IPR019954">
    <property type="entry name" value="Ubiquitin_CS"/>
</dbReference>
<dbReference type="InterPro" id="IPR019956">
    <property type="entry name" value="Ubiquitin_dom"/>
</dbReference>
<dbReference type="InterPro" id="IPR050158">
    <property type="entry name" value="Ubiquitin_ubiquitin-like"/>
</dbReference>
<dbReference type="PANTHER" id="PTHR10666">
    <property type="entry name" value="UBIQUITIN"/>
    <property type="match status" value="1"/>
</dbReference>
<dbReference type="Pfam" id="PF01020">
    <property type="entry name" value="Ribosomal_L40e"/>
    <property type="match status" value="1"/>
</dbReference>
<dbReference type="Pfam" id="PF00240">
    <property type="entry name" value="ubiquitin"/>
    <property type="match status" value="1"/>
</dbReference>
<dbReference type="PRINTS" id="PR00348">
    <property type="entry name" value="UBIQUITIN"/>
</dbReference>
<dbReference type="SMART" id="SM01377">
    <property type="entry name" value="Ribosomal_L40e"/>
    <property type="match status" value="1"/>
</dbReference>
<dbReference type="SMART" id="SM00213">
    <property type="entry name" value="UBQ"/>
    <property type="match status" value="1"/>
</dbReference>
<dbReference type="SUPFAM" id="SSF54236">
    <property type="entry name" value="Ubiquitin-like"/>
    <property type="match status" value="1"/>
</dbReference>
<dbReference type="PROSITE" id="PS00299">
    <property type="entry name" value="UBIQUITIN_1"/>
    <property type="match status" value="1"/>
</dbReference>
<dbReference type="PROSITE" id="PS50053">
    <property type="entry name" value="UBIQUITIN_2"/>
    <property type="match status" value="1"/>
</dbReference>
<gene>
    <name type="primary">UBI3</name>
</gene>
<evidence type="ECO:0000250" key="1"/>
<evidence type="ECO:0000255" key="2">
    <source>
        <dbReference type="PROSITE-ProRule" id="PRU00214"/>
    </source>
</evidence>
<evidence type="ECO:0000305" key="3"/>
<name>RL403_CHLRE</name>
<reference key="1">
    <citation type="journal article" date="1991" name="Eur. J. Biochem.">
        <title>Ubiquitin in a lower plant. Characterization of ubiquitin-encoding DNA and RNA from Chlamydomonas reinhardii.</title>
        <authorList>
            <person name="Pollmann L."/>
            <person name="von Kampen J."/>
            <person name="Wettern M."/>
        </authorList>
    </citation>
    <scope>NUCLEOTIDE SEQUENCE [MRNA]</scope>
</reference>
<reference key="2">
    <citation type="journal article" date="1992" name="Arch. Biochem. Biophys.">
        <title>Purification of Chlamydomonas 28-kDa ubiquitinated protein and its identification as ubiquitinated histone H2B.</title>
        <authorList>
            <person name="Shimogawara K."/>
            <person name="Muto S."/>
        </authorList>
    </citation>
    <scope>PROTEIN SEQUENCE OF 1-70 AND 75-76</scope>
    <source>
        <strain>cw15</strain>
    </source>
</reference>
<comment type="function">
    <molecule>Ubiquitin</molecule>
    <text evidence="1">Exists either covalently attached to another protein, or free (unanchored). When covalently bound, it is conjugated to target proteins via an isopeptide bond either as a monomer (monoubiquitin), a polymer linked via different Lys residues of the ubiquitin (polyubiquitin chains) or a linear polymer linked via the initiator Met of the ubiquitin (linear polyubiquitin chains). Polyubiquitin chains, when attached to a target protein, have different functions depending on the Lys residue of the ubiquitin that is linked: Lys-48-linked is involved in protein degradation via the proteasome. Linear polymer chains formed via attachment by the initiator Met lead to cell signaling. Ubiquitin is usually conjugated to Lys residues of target proteins, however, in rare cases, conjugation to Cys or Ser residues has been observed. When polyubiquitin is free (unanchored-polyubiquitin), it also has distinct roles, such as in activation of protein kinases, and in signaling (By similarity).</text>
</comment>
<comment type="function">
    <molecule>Large ribosomal subunit protein eL40y</molecule>
    <text>Component of the 60S subunit of the ribosome.</text>
</comment>
<comment type="subunit">
    <molecule>Large ribosomal subunit protein eL40y</molecule>
    <text evidence="1">Part of the 60S ribosomal subunit.</text>
</comment>
<comment type="subcellular location">
    <molecule>Ubiquitin</molecule>
    <subcellularLocation>
        <location evidence="1">Cytoplasm</location>
    </subcellularLocation>
    <subcellularLocation>
        <location evidence="1">Nucleus</location>
    </subcellularLocation>
</comment>
<comment type="subcellular location">
    <molecule>Large ribosomal subunit protein eL40y</molecule>
    <subcellularLocation>
        <location evidence="1">Cytoplasm</location>
    </subcellularLocation>
</comment>
<comment type="similarity">
    <text evidence="3">In the N-terminal section; belongs to the ubiquitin family.</text>
</comment>
<comment type="similarity">
    <text evidence="3">In the C-terminal section; belongs to the eukaryotic ribosomal protein eL40 family.</text>
</comment>